<proteinExistence type="predicted"/>
<keyword id="KW-0040">ANK repeat</keyword>
<keyword id="KW-1185">Reference proteome</keyword>
<keyword id="KW-0677">Repeat</keyword>
<organismHost>
    <name type="scientific">Acanthamoeba polyphaga</name>
    <name type="common">Amoeba</name>
    <dbReference type="NCBI Taxonomy" id="5757"/>
</organismHost>
<accession>Q5UPB9</accession>
<protein>
    <recommendedName>
        <fullName>Putative ankyrin repeat protein L42</fullName>
    </recommendedName>
</protein>
<organism>
    <name type="scientific">Acanthamoeba polyphaga mimivirus</name>
    <name type="common">APMV</name>
    <dbReference type="NCBI Taxonomy" id="212035"/>
    <lineage>
        <taxon>Viruses</taxon>
        <taxon>Varidnaviria</taxon>
        <taxon>Bamfordvirae</taxon>
        <taxon>Nucleocytoviricota</taxon>
        <taxon>Megaviricetes</taxon>
        <taxon>Imitervirales</taxon>
        <taxon>Mimiviridae</taxon>
        <taxon>Megamimivirinae</taxon>
        <taxon>Mimivirus</taxon>
        <taxon>Mimivirus bradfordmassiliense</taxon>
    </lineage>
</organism>
<reference key="1">
    <citation type="journal article" date="2004" name="Science">
        <title>The 1.2-megabase genome sequence of Mimivirus.</title>
        <authorList>
            <person name="Raoult D."/>
            <person name="Audic S."/>
            <person name="Robert C."/>
            <person name="Abergel C."/>
            <person name="Renesto P."/>
            <person name="Ogata H."/>
            <person name="La Scola B."/>
            <person name="Susan M."/>
            <person name="Claverie J.-M."/>
        </authorList>
    </citation>
    <scope>NUCLEOTIDE SEQUENCE [LARGE SCALE GENOMIC DNA]</scope>
    <source>
        <strain>Rowbotham-Bradford</strain>
    </source>
</reference>
<gene>
    <name type="ordered locus">MIMI_L42</name>
</gene>
<feature type="chain" id="PRO_0000067139" description="Putative ankyrin repeat protein L42">
    <location>
        <begin position="1"/>
        <end position="357"/>
    </location>
</feature>
<feature type="repeat" description="ANK 1">
    <location>
        <begin position="34"/>
        <end position="63"/>
    </location>
</feature>
<feature type="repeat" description="ANK 2">
    <location>
        <begin position="86"/>
        <end position="115"/>
    </location>
</feature>
<feature type="repeat" description="ANK 3">
    <location>
        <begin position="116"/>
        <end position="145"/>
    </location>
</feature>
<feature type="repeat" description="ANK 4">
    <location>
        <begin position="147"/>
        <end position="175"/>
    </location>
</feature>
<feature type="repeat" description="ANK 5">
    <location>
        <begin position="176"/>
        <end position="205"/>
    </location>
</feature>
<feature type="repeat" description="ANK 6">
    <location>
        <begin position="206"/>
        <end position="235"/>
    </location>
</feature>
<feature type="repeat" description="ANK 7">
    <location>
        <begin position="237"/>
        <end position="265"/>
    </location>
</feature>
<feature type="repeat" description="ANK 8">
    <location>
        <begin position="267"/>
        <end position="294"/>
    </location>
</feature>
<feature type="repeat" description="ANK 9">
    <location>
        <begin position="301"/>
        <end position="331"/>
    </location>
</feature>
<name>YL042_MIMIV</name>
<dbReference type="EMBL" id="AY653733">
    <property type="protein sequence ID" value="AAV50317.1"/>
    <property type="molecule type" value="Genomic_DNA"/>
</dbReference>
<dbReference type="SMR" id="Q5UPB9"/>
<dbReference type="KEGG" id="vg:9924627"/>
<dbReference type="OrthoDB" id="31888at10239"/>
<dbReference type="Proteomes" id="UP000001134">
    <property type="component" value="Genome"/>
</dbReference>
<dbReference type="Gene3D" id="1.25.40.20">
    <property type="entry name" value="Ankyrin repeat-containing domain"/>
    <property type="match status" value="3"/>
</dbReference>
<dbReference type="InterPro" id="IPR002110">
    <property type="entry name" value="Ankyrin_rpt"/>
</dbReference>
<dbReference type="InterPro" id="IPR036770">
    <property type="entry name" value="Ankyrin_rpt-contain_sf"/>
</dbReference>
<dbReference type="PANTHER" id="PTHR44207:SF2">
    <property type="entry name" value="REPEAT PROTEIN, PUTATIVE-RELATED"/>
    <property type="match status" value="1"/>
</dbReference>
<dbReference type="PANTHER" id="PTHR44207">
    <property type="entry name" value="SURFACE ANTIGEN BSPA-LIKE-RELATED"/>
    <property type="match status" value="1"/>
</dbReference>
<dbReference type="Pfam" id="PF12796">
    <property type="entry name" value="Ank_2"/>
    <property type="match status" value="2"/>
</dbReference>
<dbReference type="SMART" id="SM00248">
    <property type="entry name" value="ANK"/>
    <property type="match status" value="8"/>
</dbReference>
<dbReference type="SUPFAM" id="SSF48403">
    <property type="entry name" value="Ankyrin repeat"/>
    <property type="match status" value="1"/>
</dbReference>
<dbReference type="PROSITE" id="PS50297">
    <property type="entry name" value="ANK_REP_REGION"/>
    <property type="match status" value="1"/>
</dbReference>
<dbReference type="PROSITE" id="PS50088">
    <property type="entry name" value="ANK_REPEAT"/>
    <property type="match status" value="1"/>
</dbReference>
<sequence length="357" mass="41227">MDHFDQDTYHNLPVEIWKHIIDSDIDSTINLLFSCKQFIGLVCILTNNLNLLNLLVKKGNLKFLEFYFRLNTETNKLYTEQRLRVEQNECLKMSCIHGCLEILKYLISIGVDFRMNDDEPLMLAIENGHLKIVQFLYSKRVNIRARNNRPLVLSCEKGYINIVNFLLDKKASFVSKQNEVFSTACGFGQMDIVKLLVEKGADINVGKIPPIRAAAAGGHLNVIEHLVNKGASINKCSVDSLFSAAFYGHLNIVKYLLGYISEVNIIYYAFEKACINGHIDIVQYLFSENIITKDIITENSNTRYLFYHTIRNKHKHIIKFLIENNIFDKDKKYPDILESAPKDMDPYDYLISFLNYQ</sequence>